<accession>Q8T6B7</accession>
<accession>Q54Q58</accession>
<dbReference type="EMBL" id="AF479254">
    <property type="protein sequence ID" value="AAL87692.1"/>
    <property type="molecule type" value="Genomic_DNA"/>
</dbReference>
<dbReference type="EMBL" id="AAFI02000063">
    <property type="protein sequence ID" value="EAL65364.1"/>
    <property type="molecule type" value="Genomic_DNA"/>
</dbReference>
<dbReference type="RefSeq" id="XP_638739.1">
    <property type="nucleotide sequence ID" value="XM_633647.1"/>
</dbReference>
<dbReference type="SMR" id="Q8T6B7"/>
<dbReference type="FunCoup" id="Q8T6B7">
    <property type="interactions" value="281"/>
</dbReference>
<dbReference type="STRING" id="44689.Q8T6B7"/>
<dbReference type="GlyGen" id="Q8T6B7">
    <property type="glycosylation" value="1 site"/>
</dbReference>
<dbReference type="PaxDb" id="44689-DDB0191228"/>
<dbReference type="EnsemblProtists" id="EAL65364">
    <property type="protein sequence ID" value="EAL65364"/>
    <property type="gene ID" value="DDB_G0284047"/>
</dbReference>
<dbReference type="GeneID" id="8624409"/>
<dbReference type="KEGG" id="ddi:DDB_G0284047"/>
<dbReference type="dictyBase" id="DDB_G0284047">
    <property type="gene designation" value="abcF2"/>
</dbReference>
<dbReference type="VEuPathDB" id="AmoebaDB:DDB_G0284047"/>
<dbReference type="eggNOG" id="KOG0927">
    <property type="taxonomic scope" value="Eukaryota"/>
</dbReference>
<dbReference type="HOGENOM" id="CLU_000604_36_6_1"/>
<dbReference type="InParanoid" id="Q8T6B7"/>
<dbReference type="OMA" id="DWMGQWT"/>
<dbReference type="PhylomeDB" id="Q8T6B7"/>
<dbReference type="PRO" id="PR:Q8T6B7"/>
<dbReference type="Proteomes" id="UP000002195">
    <property type="component" value="Chromosome 4"/>
</dbReference>
<dbReference type="GO" id="GO:0005524">
    <property type="term" value="F:ATP binding"/>
    <property type="evidence" value="ECO:0000318"/>
    <property type="project" value="GO_Central"/>
</dbReference>
<dbReference type="GO" id="GO:0016887">
    <property type="term" value="F:ATP hydrolysis activity"/>
    <property type="evidence" value="ECO:0007669"/>
    <property type="project" value="InterPro"/>
</dbReference>
<dbReference type="GO" id="GO:0031152">
    <property type="term" value="P:aggregation involved in sorocarp development"/>
    <property type="evidence" value="ECO:0000315"/>
    <property type="project" value="dictyBase"/>
</dbReference>
<dbReference type="GO" id="GO:0031288">
    <property type="term" value="P:sorocarp morphogenesis"/>
    <property type="evidence" value="ECO:0000315"/>
    <property type="project" value="dictyBase"/>
</dbReference>
<dbReference type="CDD" id="cd03221">
    <property type="entry name" value="ABCF_EF-3"/>
    <property type="match status" value="2"/>
</dbReference>
<dbReference type="FunFam" id="3.40.50.300:FF:000618">
    <property type="entry name" value="ATP-binding cassette (ABC) transporter, putative"/>
    <property type="match status" value="1"/>
</dbReference>
<dbReference type="FunFam" id="3.40.50.300:FF:000104">
    <property type="entry name" value="ATP-binding cassette sub-family F member 3"/>
    <property type="match status" value="1"/>
</dbReference>
<dbReference type="Gene3D" id="3.40.50.300">
    <property type="entry name" value="P-loop containing nucleotide triphosphate hydrolases"/>
    <property type="match status" value="2"/>
</dbReference>
<dbReference type="InterPro" id="IPR003593">
    <property type="entry name" value="AAA+_ATPase"/>
</dbReference>
<dbReference type="InterPro" id="IPR032781">
    <property type="entry name" value="ABC_tran_Xtn"/>
</dbReference>
<dbReference type="InterPro" id="IPR003439">
    <property type="entry name" value="ABC_transporter-like_ATP-bd"/>
</dbReference>
<dbReference type="InterPro" id="IPR017871">
    <property type="entry name" value="ABC_transporter-like_CS"/>
</dbReference>
<dbReference type="InterPro" id="IPR050611">
    <property type="entry name" value="ABCF_EF3_subfamily"/>
</dbReference>
<dbReference type="InterPro" id="IPR027417">
    <property type="entry name" value="P-loop_NTPase"/>
</dbReference>
<dbReference type="PANTHER" id="PTHR19211:SF15">
    <property type="entry name" value="ATP-BINDING CASSETTE SUB-FAMILY F MEMBER 2"/>
    <property type="match status" value="1"/>
</dbReference>
<dbReference type="PANTHER" id="PTHR19211">
    <property type="entry name" value="ATP-BINDING TRANSPORT PROTEIN-RELATED"/>
    <property type="match status" value="1"/>
</dbReference>
<dbReference type="Pfam" id="PF00005">
    <property type="entry name" value="ABC_tran"/>
    <property type="match status" value="2"/>
</dbReference>
<dbReference type="Pfam" id="PF12848">
    <property type="entry name" value="ABC_tran_Xtn"/>
    <property type="match status" value="1"/>
</dbReference>
<dbReference type="SMART" id="SM00382">
    <property type="entry name" value="AAA"/>
    <property type="match status" value="2"/>
</dbReference>
<dbReference type="SUPFAM" id="SSF52540">
    <property type="entry name" value="P-loop containing nucleoside triphosphate hydrolases"/>
    <property type="match status" value="2"/>
</dbReference>
<dbReference type="PROSITE" id="PS00211">
    <property type="entry name" value="ABC_TRANSPORTER_1"/>
    <property type="match status" value="1"/>
</dbReference>
<dbReference type="PROSITE" id="PS50893">
    <property type="entry name" value="ABC_TRANSPORTER_2"/>
    <property type="match status" value="2"/>
</dbReference>
<reference key="1">
    <citation type="journal article" date="2002" name="Eukaryot. Cell">
        <title>Evolutionary analyses of ABC transporters of Dictyostelium discoideum.</title>
        <authorList>
            <person name="Anjard C."/>
            <person name="Loomis W.F."/>
        </authorList>
    </citation>
    <scope>NUCLEOTIDE SEQUENCE [GENOMIC DNA]</scope>
    <scope>NOMENCLATURE</scope>
    <source>
        <strain>AX4</strain>
    </source>
</reference>
<reference key="2">
    <citation type="journal article" date="2005" name="Nature">
        <title>The genome of the social amoeba Dictyostelium discoideum.</title>
        <authorList>
            <person name="Eichinger L."/>
            <person name="Pachebat J.A."/>
            <person name="Gloeckner G."/>
            <person name="Rajandream M.A."/>
            <person name="Sucgang R."/>
            <person name="Berriman M."/>
            <person name="Song J."/>
            <person name="Olsen R."/>
            <person name="Szafranski K."/>
            <person name="Xu Q."/>
            <person name="Tunggal B."/>
            <person name="Kummerfeld S."/>
            <person name="Madera M."/>
            <person name="Konfortov B.A."/>
            <person name="Rivero F."/>
            <person name="Bankier A.T."/>
            <person name="Lehmann R."/>
            <person name="Hamlin N."/>
            <person name="Davies R."/>
            <person name="Gaudet P."/>
            <person name="Fey P."/>
            <person name="Pilcher K."/>
            <person name="Chen G."/>
            <person name="Saunders D."/>
            <person name="Sodergren E.J."/>
            <person name="Davis P."/>
            <person name="Kerhornou A."/>
            <person name="Nie X."/>
            <person name="Hall N."/>
            <person name="Anjard C."/>
            <person name="Hemphill L."/>
            <person name="Bason N."/>
            <person name="Farbrother P."/>
            <person name="Desany B."/>
            <person name="Just E."/>
            <person name="Morio T."/>
            <person name="Rost R."/>
            <person name="Churcher C.M."/>
            <person name="Cooper J."/>
            <person name="Haydock S."/>
            <person name="van Driessche N."/>
            <person name="Cronin A."/>
            <person name="Goodhead I."/>
            <person name="Muzny D.M."/>
            <person name="Mourier T."/>
            <person name="Pain A."/>
            <person name="Lu M."/>
            <person name="Harper D."/>
            <person name="Lindsay R."/>
            <person name="Hauser H."/>
            <person name="James K.D."/>
            <person name="Quiles M."/>
            <person name="Madan Babu M."/>
            <person name="Saito T."/>
            <person name="Buchrieser C."/>
            <person name="Wardroper A."/>
            <person name="Felder M."/>
            <person name="Thangavelu M."/>
            <person name="Johnson D."/>
            <person name="Knights A."/>
            <person name="Loulseged H."/>
            <person name="Mungall K.L."/>
            <person name="Oliver K."/>
            <person name="Price C."/>
            <person name="Quail M.A."/>
            <person name="Urushihara H."/>
            <person name="Hernandez J."/>
            <person name="Rabbinowitsch E."/>
            <person name="Steffen D."/>
            <person name="Sanders M."/>
            <person name="Ma J."/>
            <person name="Kohara Y."/>
            <person name="Sharp S."/>
            <person name="Simmonds M.N."/>
            <person name="Spiegler S."/>
            <person name="Tivey A."/>
            <person name="Sugano S."/>
            <person name="White B."/>
            <person name="Walker D."/>
            <person name="Woodward J.R."/>
            <person name="Winckler T."/>
            <person name="Tanaka Y."/>
            <person name="Shaulsky G."/>
            <person name="Schleicher M."/>
            <person name="Weinstock G.M."/>
            <person name="Rosenthal A."/>
            <person name="Cox E.C."/>
            <person name="Chisholm R.L."/>
            <person name="Gibbs R.A."/>
            <person name="Loomis W.F."/>
            <person name="Platzer M."/>
            <person name="Kay R.R."/>
            <person name="Williams J.G."/>
            <person name="Dear P.H."/>
            <person name="Noegel A.A."/>
            <person name="Barrell B.G."/>
            <person name="Kuspa A."/>
        </authorList>
    </citation>
    <scope>NUCLEOTIDE SEQUENCE [LARGE SCALE GENOMIC DNA]</scope>
    <source>
        <strain>AX4</strain>
    </source>
</reference>
<gene>
    <name type="primary">abcF2</name>
    <name type="ORF">DDB_G0284047</name>
</gene>
<name>ABCF2_DICDI</name>
<evidence type="ECO:0000255" key="1">
    <source>
        <dbReference type="PROSITE-ProRule" id="PRU00434"/>
    </source>
</evidence>
<evidence type="ECO:0000256" key="2">
    <source>
        <dbReference type="SAM" id="MobiDB-lite"/>
    </source>
</evidence>
<evidence type="ECO:0000305" key="3"/>
<comment type="similarity">
    <text evidence="3">Belongs to the ABC transporter superfamily. ABCF family. EF3 subfamily.</text>
</comment>
<comment type="caution">
    <text evidence="3">Lacks transmembrane domains and is probably not involved in transport.</text>
</comment>
<feature type="chain" id="PRO_0000365607" description="ABC transporter F family member 2">
    <location>
        <begin position="1"/>
        <end position="593"/>
    </location>
</feature>
<feature type="domain" description="ABC transporter 1" evidence="1">
    <location>
        <begin position="53"/>
        <end position="294"/>
    </location>
</feature>
<feature type="domain" description="ABC transporter 2" evidence="1">
    <location>
        <begin position="364"/>
        <end position="583"/>
    </location>
</feature>
<feature type="region of interest" description="Disordered" evidence="2">
    <location>
        <begin position="1"/>
        <end position="25"/>
    </location>
</feature>
<feature type="compositionally biased region" description="Basic residues" evidence="2">
    <location>
        <begin position="1"/>
        <end position="10"/>
    </location>
</feature>
<feature type="binding site" evidence="1">
    <location>
        <begin position="85"/>
        <end position="92"/>
    </location>
    <ligand>
        <name>ATP</name>
        <dbReference type="ChEBI" id="CHEBI:30616"/>
        <label>1</label>
    </ligand>
</feature>
<feature type="binding site" evidence="1">
    <location>
        <begin position="399"/>
        <end position="406"/>
    </location>
    <ligand>
        <name>ATP</name>
        <dbReference type="ChEBI" id="CHEBI:30616"/>
        <label>2</label>
    </ligand>
</feature>
<proteinExistence type="inferred from homology"/>
<organism>
    <name type="scientific">Dictyostelium discoideum</name>
    <name type="common">Social amoeba</name>
    <dbReference type="NCBI Taxonomy" id="44689"/>
    <lineage>
        <taxon>Eukaryota</taxon>
        <taxon>Amoebozoa</taxon>
        <taxon>Evosea</taxon>
        <taxon>Eumycetozoa</taxon>
        <taxon>Dictyostelia</taxon>
        <taxon>Dictyosteliales</taxon>
        <taxon>Dictyosteliaceae</taxon>
        <taxon>Dictyostelium</taxon>
    </lineage>
</organism>
<keyword id="KW-0067">ATP-binding</keyword>
<keyword id="KW-0547">Nucleotide-binding</keyword>
<keyword id="KW-1185">Reference proteome</keyword>
<keyword id="KW-0677">Repeat</keyword>
<protein>
    <recommendedName>
        <fullName>ABC transporter F family member 2</fullName>
    </recommendedName>
</protein>
<sequence length="593" mass="66841">MAKKGGKNNKSKKEVTPPTSDVEDEVQDKFKEMRLNAFTATGALASKESSRDVKIEQVTLTFHGKELLSDTTVEINFGRRYGLIGQNGCGKSTFFQCLAVRELPIPEHIDIFHLSEEAHPSERTALQSVIDDAEKEVKRLEVLEERLLEEQGPESEELFDVYERLENLDPTTFVPRASEILIGLGFTSQTMLKKTKDLSGGWRMRVSLAKALFIKPTLLLLDEPTNHLDLGACVWLEDYLANYDRSLIIISHSQDFLNAVCTNIIHMTQSKLKYYGGNYDNFVKTKAELEVNQMKAYHKQQEEIAHIKSFIASCGTYSNLVRQGKSKQKIIDKMEEAGLVERVQEDKIFNFSFPPCGELAPPIMHFDNVTFSYSGKEADVLYRNLDLAIDLDSRIALVGPNGAGKSTLLKLMVGQISPTQGFIKKHSHLKMARYHQHAHEVLDLTATPLDFVRSKFAHMNKDTEEWRREIGRFGVTGKAQTEAIGCMSDGIKSRLIFCLMALENPHLLLLDEPTNHLDMECIDSLALAINSFPGGMILVSHDFRLISQVAKEIWVCDNKTITKWAGDITSYKNHLKAQMRDLTKQGALASLKK</sequence>